<keyword id="KW-0963">Cytoplasm</keyword>
<keyword id="KW-0235">DNA replication</keyword>
<keyword id="KW-0239">DNA-directed DNA polymerase</keyword>
<keyword id="KW-0548">Nucleotidyltransferase</keyword>
<keyword id="KW-0808">Transferase</keyword>
<gene>
    <name type="primary">dnaE</name>
    <name type="ordered locus">jhp_1353</name>
</gene>
<protein>
    <recommendedName>
        <fullName>DNA polymerase III subunit alpha</fullName>
        <ecNumber>2.7.7.7</ecNumber>
    </recommendedName>
</protein>
<feature type="chain" id="PRO_0000103324" description="DNA polymerase III subunit alpha">
    <location>
        <begin position="1"/>
        <end position="1211"/>
    </location>
</feature>
<name>DPO3A_HELPJ</name>
<sequence>MKENKAFTHLHLHTEYSLLDGANKIKILAKRIKELGMKSVSVTDHGNMFGAIDFYTSMKKEGIKPIIGMEAYIHNDDNLSSKETKQRFHLCLFAKNQEGYENLMFLSSMAYLEGFYYFPRINKKLLREHSKGIIASSACLQGEVNYHLNTNNERNRKYGAKGYDEAKRIACEYQEIFEDDFYLEIMRHGILDQRFIDEQVIKMSLETGLKIIATNDTHYTMPNDAKAQEVAMCVAMGKTLNDKGRLKHSVHEFYIKSPEEMAKLFADIPEALENTQEIADKCVLEIDLKDDKKNPPTPPSFKFTKAYAQNEGLSFEDDASYFAHKAREGLRERLILVPEEKHEQYKERLEKEIEVITNMKFPGYMLIVWDFIRYAKEMGIPVGPGRGSAAGSLVAFALKITDIDPLKYDLLFERFLNPERVSMPDIDTDFCQRRRKEIIEYMIEKYGKYNVAQVITFNKMLAKGVIRDVARVLDMPYKEADDFAKLIPNRLGITLKGYEKNGEFIEGAWELEPKIKELVESNEVAKQVWEYSLNLENLNRNAGVHAAALVVDSQKELWHKTPLFASEKTGGIVTQYSMKYLEPVDLIKFDFLGLKTLTVIDDALKIIKTQHNIDVDFLSLDMDDPKVYKTIQSGDTVGIFQIESGMFQGLNKRLRPSSFEDIIAIIALGRPGPMESGMVDDFVNRKHGVEPIAYAFKELEPILKPTYGTIVYQEQVMQIVQTIGGFSLGEADLIRRAMGKKDAQIMADNKAKFVEGAKNLGHDGQKAANLWDLIVKFAGYGFNKSHSAAYAMITFQTAYLKTYYKHEFMAAMLTSESNKIESVARYIDEVRALEIEVMPPHINSSMQDFSVAEFKNQKGELEKKIVFGLGAVKGVGGEPIKNIIEERAKGDYKSLEDFISRVDFSKLTKKSLEPLVKSGSLDNLGYTRKTMLANLDLICDAGRAKDKANEMMQGGNSLFGAMEGGIKEQVVLDMVDLGEHDAKTLLECEYETLGIHVSGNPLDEFKEEIKGFKNLVKSIDIEELEIGSQAYLLGKIMEVKKKIGKRSGKPYGTADILDRYGKFELMLFEKQLNALEELDINKPLVFKCKIEEQEEVARLRLFEILDLESAREVKIPKARYKDPEKQKEDVREIPPMEMLASSSCSLAIVLENDVKKEFLRQIKESALKHQGKRPLYLIIKDKDKQFKIQSDLMVNEKIKDDFKGLEWRDLA</sequence>
<accession>Q9ZJF9</accession>
<comment type="function">
    <text evidence="1">DNA polymerase III is a complex, multichain enzyme responsible for most of the replicative synthesis in bacteria. This DNA polymerase also exhibits 3' to 5' exonuclease activity. The alpha chain is the DNA polymerase (By similarity).</text>
</comment>
<comment type="catalytic activity">
    <reaction>
        <text>DNA(n) + a 2'-deoxyribonucleoside 5'-triphosphate = DNA(n+1) + diphosphate</text>
        <dbReference type="Rhea" id="RHEA:22508"/>
        <dbReference type="Rhea" id="RHEA-COMP:17339"/>
        <dbReference type="Rhea" id="RHEA-COMP:17340"/>
        <dbReference type="ChEBI" id="CHEBI:33019"/>
        <dbReference type="ChEBI" id="CHEBI:61560"/>
        <dbReference type="ChEBI" id="CHEBI:173112"/>
        <dbReference type="EC" id="2.7.7.7"/>
    </reaction>
</comment>
<comment type="subunit">
    <text evidence="1">DNA polymerase III contains a core (composed of alpha, epsilon and theta chains) that associates with a tau subunit. This core dimerizes to form the PolIII' complex. PolIII' associates with the gamma complex (composed of gamma, delta, delta', psi and chi chains) and with the beta chain to form the complete DNA polymerase III complex (By similarity).</text>
</comment>
<comment type="subcellular location">
    <subcellularLocation>
        <location evidence="1">Cytoplasm</location>
    </subcellularLocation>
</comment>
<comment type="similarity">
    <text evidence="2">Belongs to the DNA polymerase type-C family. DnaE subfamily.</text>
</comment>
<organism>
    <name type="scientific">Helicobacter pylori (strain J99 / ATCC 700824)</name>
    <name type="common">Campylobacter pylori J99</name>
    <dbReference type="NCBI Taxonomy" id="85963"/>
    <lineage>
        <taxon>Bacteria</taxon>
        <taxon>Pseudomonadati</taxon>
        <taxon>Campylobacterota</taxon>
        <taxon>Epsilonproteobacteria</taxon>
        <taxon>Campylobacterales</taxon>
        <taxon>Helicobacteraceae</taxon>
        <taxon>Helicobacter</taxon>
    </lineage>
</organism>
<evidence type="ECO:0000250" key="1"/>
<evidence type="ECO:0000305" key="2"/>
<proteinExistence type="inferred from homology"/>
<dbReference type="EC" id="2.7.7.7"/>
<dbReference type="EMBL" id="AE001439">
    <property type="protein sequence ID" value="AAD06929.1"/>
    <property type="molecule type" value="Genomic_DNA"/>
</dbReference>
<dbReference type="PIR" id="C71817">
    <property type="entry name" value="C71817"/>
</dbReference>
<dbReference type="RefSeq" id="WP_000662156.1">
    <property type="nucleotide sequence ID" value="NC_000921.1"/>
</dbReference>
<dbReference type="SMR" id="Q9ZJF9"/>
<dbReference type="KEGG" id="hpj:jhp_1353"/>
<dbReference type="PATRIC" id="fig|85963.30.peg.1198"/>
<dbReference type="eggNOG" id="COG0587">
    <property type="taxonomic scope" value="Bacteria"/>
</dbReference>
<dbReference type="Proteomes" id="UP000000804">
    <property type="component" value="Chromosome"/>
</dbReference>
<dbReference type="GO" id="GO:0005737">
    <property type="term" value="C:cytoplasm"/>
    <property type="evidence" value="ECO:0007669"/>
    <property type="project" value="UniProtKB-SubCell"/>
</dbReference>
<dbReference type="GO" id="GO:0008408">
    <property type="term" value="F:3'-5' exonuclease activity"/>
    <property type="evidence" value="ECO:0007669"/>
    <property type="project" value="InterPro"/>
</dbReference>
<dbReference type="GO" id="GO:0003887">
    <property type="term" value="F:DNA-directed DNA polymerase activity"/>
    <property type="evidence" value="ECO:0007669"/>
    <property type="project" value="UniProtKB-KW"/>
</dbReference>
<dbReference type="GO" id="GO:0006260">
    <property type="term" value="P:DNA replication"/>
    <property type="evidence" value="ECO:0007669"/>
    <property type="project" value="UniProtKB-KW"/>
</dbReference>
<dbReference type="CDD" id="cd04485">
    <property type="entry name" value="DnaE_OBF"/>
    <property type="match status" value="1"/>
</dbReference>
<dbReference type="CDD" id="cd12113">
    <property type="entry name" value="PHP_PolIIIA_DnaE3"/>
    <property type="match status" value="1"/>
</dbReference>
<dbReference type="Gene3D" id="1.10.150.870">
    <property type="match status" value="1"/>
</dbReference>
<dbReference type="Gene3D" id="1.10.10.1600">
    <property type="entry name" value="Bacterial DNA polymerase III alpha subunit, thumb domain"/>
    <property type="match status" value="1"/>
</dbReference>
<dbReference type="Gene3D" id="3.20.20.140">
    <property type="entry name" value="Metal-dependent hydrolases"/>
    <property type="match status" value="1"/>
</dbReference>
<dbReference type="InterPro" id="IPR011708">
    <property type="entry name" value="DNA_pol3_alpha_NTPase_dom"/>
</dbReference>
<dbReference type="InterPro" id="IPR041931">
    <property type="entry name" value="DNA_pol3_alpha_thumb_dom"/>
</dbReference>
<dbReference type="InterPro" id="IPR040982">
    <property type="entry name" value="DNA_pol3_finger"/>
</dbReference>
<dbReference type="InterPro" id="IPR004805">
    <property type="entry name" value="DnaE2/DnaE/PolC"/>
</dbReference>
<dbReference type="InterPro" id="IPR029460">
    <property type="entry name" value="DNAPol_HHH"/>
</dbReference>
<dbReference type="InterPro" id="IPR004013">
    <property type="entry name" value="PHP_dom"/>
</dbReference>
<dbReference type="InterPro" id="IPR003141">
    <property type="entry name" value="Pol/His_phosphatase_N"/>
</dbReference>
<dbReference type="InterPro" id="IPR016195">
    <property type="entry name" value="Pol/histidinol_Pase-like"/>
</dbReference>
<dbReference type="NCBIfam" id="TIGR00594">
    <property type="entry name" value="polc"/>
    <property type="match status" value="1"/>
</dbReference>
<dbReference type="NCBIfam" id="NF004226">
    <property type="entry name" value="PRK05673.1"/>
    <property type="match status" value="1"/>
</dbReference>
<dbReference type="PANTHER" id="PTHR32294">
    <property type="entry name" value="DNA POLYMERASE III SUBUNIT ALPHA"/>
    <property type="match status" value="1"/>
</dbReference>
<dbReference type="PANTHER" id="PTHR32294:SF0">
    <property type="entry name" value="DNA POLYMERASE III SUBUNIT ALPHA"/>
    <property type="match status" value="1"/>
</dbReference>
<dbReference type="Pfam" id="PF07733">
    <property type="entry name" value="DNA_pol3_alpha"/>
    <property type="match status" value="1"/>
</dbReference>
<dbReference type="Pfam" id="PF17657">
    <property type="entry name" value="DNA_pol3_finger"/>
    <property type="match status" value="1"/>
</dbReference>
<dbReference type="Pfam" id="PF14579">
    <property type="entry name" value="HHH_6"/>
    <property type="match status" value="1"/>
</dbReference>
<dbReference type="Pfam" id="PF02811">
    <property type="entry name" value="PHP"/>
    <property type="match status" value="1"/>
</dbReference>
<dbReference type="SMART" id="SM00481">
    <property type="entry name" value="POLIIIAc"/>
    <property type="match status" value="1"/>
</dbReference>
<dbReference type="SUPFAM" id="SSF160975">
    <property type="entry name" value="AF1531-like"/>
    <property type="match status" value="1"/>
</dbReference>
<dbReference type="SUPFAM" id="SSF89550">
    <property type="entry name" value="PHP domain-like"/>
    <property type="match status" value="1"/>
</dbReference>
<reference key="1">
    <citation type="journal article" date="1999" name="Nature">
        <title>Genomic sequence comparison of two unrelated isolates of the human gastric pathogen Helicobacter pylori.</title>
        <authorList>
            <person name="Alm R.A."/>
            <person name="Ling L.-S.L."/>
            <person name="Moir D.T."/>
            <person name="King B.L."/>
            <person name="Brown E.D."/>
            <person name="Doig P.C."/>
            <person name="Smith D.R."/>
            <person name="Noonan B."/>
            <person name="Guild B.C."/>
            <person name="deJonge B.L."/>
            <person name="Carmel G."/>
            <person name="Tummino P.J."/>
            <person name="Caruso A."/>
            <person name="Uria-Nickelsen M."/>
            <person name="Mills D.M."/>
            <person name="Ives C."/>
            <person name="Gibson R."/>
            <person name="Merberg D."/>
            <person name="Mills S.D."/>
            <person name="Jiang Q."/>
            <person name="Taylor D.E."/>
            <person name="Vovis G.F."/>
            <person name="Trust T.J."/>
        </authorList>
    </citation>
    <scope>NUCLEOTIDE SEQUENCE [LARGE SCALE GENOMIC DNA]</scope>
    <source>
        <strain>J99 / ATCC 700824</strain>
    </source>
</reference>